<dbReference type="EMBL" id="AE017333">
    <property type="protein sequence ID" value="AAU42598.1"/>
    <property type="status" value="ALT_INIT"/>
    <property type="molecule type" value="Genomic_DNA"/>
</dbReference>
<dbReference type="EMBL" id="CP000002">
    <property type="protein sequence ID" value="AAU25226.1"/>
    <property type="molecule type" value="Genomic_DNA"/>
</dbReference>
<dbReference type="RefSeq" id="WP_011198351.1">
    <property type="nucleotide sequence ID" value="NC_006322.1"/>
</dbReference>
<dbReference type="SMR" id="Q65EB6"/>
<dbReference type="STRING" id="279010.BL03372"/>
<dbReference type="GeneID" id="92859643"/>
<dbReference type="KEGG" id="bld:BLi03782"/>
<dbReference type="KEGG" id="bli:BL03372"/>
<dbReference type="PATRIC" id="fig|279010.13.peg.3848"/>
<dbReference type="eggNOG" id="COG1699">
    <property type="taxonomic scope" value="Bacteria"/>
</dbReference>
<dbReference type="HOGENOM" id="CLU_112356_0_2_9"/>
<dbReference type="Proteomes" id="UP000000606">
    <property type="component" value="Chromosome"/>
</dbReference>
<dbReference type="GO" id="GO:0005737">
    <property type="term" value="C:cytoplasm"/>
    <property type="evidence" value="ECO:0007669"/>
    <property type="project" value="UniProtKB-SubCell"/>
</dbReference>
<dbReference type="GO" id="GO:0044780">
    <property type="term" value="P:bacterial-type flagellum assembly"/>
    <property type="evidence" value="ECO:0007669"/>
    <property type="project" value="UniProtKB-UniRule"/>
</dbReference>
<dbReference type="GO" id="GO:0006417">
    <property type="term" value="P:regulation of translation"/>
    <property type="evidence" value="ECO:0007669"/>
    <property type="project" value="UniProtKB-KW"/>
</dbReference>
<dbReference type="Gene3D" id="2.30.290.10">
    <property type="entry name" value="BH3618-like"/>
    <property type="match status" value="1"/>
</dbReference>
<dbReference type="HAMAP" id="MF_01185">
    <property type="entry name" value="FliW"/>
    <property type="match status" value="1"/>
</dbReference>
<dbReference type="InterPro" id="IPR003775">
    <property type="entry name" value="Flagellar_assembly_factor_FliW"/>
</dbReference>
<dbReference type="InterPro" id="IPR024046">
    <property type="entry name" value="Flagellar_assmbl_FliW_dom_sf"/>
</dbReference>
<dbReference type="NCBIfam" id="NF009793">
    <property type="entry name" value="PRK13285.1-1"/>
    <property type="match status" value="1"/>
</dbReference>
<dbReference type="PANTHER" id="PTHR39190">
    <property type="entry name" value="FLAGELLAR ASSEMBLY FACTOR FLIW"/>
    <property type="match status" value="1"/>
</dbReference>
<dbReference type="PANTHER" id="PTHR39190:SF1">
    <property type="entry name" value="FLAGELLAR ASSEMBLY FACTOR FLIW"/>
    <property type="match status" value="1"/>
</dbReference>
<dbReference type="Pfam" id="PF02623">
    <property type="entry name" value="FliW"/>
    <property type="match status" value="1"/>
</dbReference>
<dbReference type="SUPFAM" id="SSF141457">
    <property type="entry name" value="BH3618-like"/>
    <property type="match status" value="1"/>
</dbReference>
<name>FLIW_BACLD</name>
<accession>Q65EB6</accession>
<accession>Q62PT5</accession>
<comment type="function">
    <text evidence="1">Acts as an anti-CsrA protein, binds CsrA and prevents it from repressing translation of its target genes, one of which is flagellin. Binds to flagellin and participates in the assembly of the flagellum.</text>
</comment>
<comment type="subunit">
    <text evidence="1">Interacts with translational regulator CsrA and flagellin(s).</text>
</comment>
<comment type="subcellular location">
    <subcellularLocation>
        <location evidence="1">Cytoplasm</location>
    </subcellularLocation>
</comment>
<comment type="similarity">
    <text evidence="1">Belongs to the FliW family.</text>
</comment>
<comment type="sequence caution" evidence="2">
    <conflict type="erroneous initiation">
        <sequence resource="EMBL-CDS" id="AAU42598"/>
    </conflict>
    <text>Extended N-terminus.</text>
</comment>
<reference key="1">
    <citation type="journal article" date="2004" name="J. Mol. Microbiol. Biotechnol.">
        <title>The complete genome sequence of Bacillus licheniformis DSM13, an organism with great industrial potential.</title>
        <authorList>
            <person name="Veith B."/>
            <person name="Herzberg C."/>
            <person name="Steckel S."/>
            <person name="Feesche J."/>
            <person name="Maurer K.H."/>
            <person name="Ehrenreich P."/>
            <person name="Baeumer S."/>
            <person name="Henne A."/>
            <person name="Liesegang H."/>
            <person name="Merkl R."/>
            <person name="Ehrenreich A."/>
            <person name="Gottschalk G."/>
        </authorList>
    </citation>
    <scope>NUCLEOTIDE SEQUENCE [LARGE SCALE GENOMIC DNA]</scope>
    <source>
        <strain>ATCC 14580 / DSM 13 / JCM 2505 / CCUG 7422 / NBRC 12200 / NCIMB 9375 / NCTC 10341 / NRRL NRS-1264 / Gibson 46</strain>
    </source>
</reference>
<reference key="2">
    <citation type="journal article" date="2004" name="Genome Biol.">
        <title>Complete genome sequence of the industrial bacterium Bacillus licheniformis and comparisons with closely related Bacillus species.</title>
        <authorList>
            <person name="Rey M.W."/>
            <person name="Ramaiya P."/>
            <person name="Nelson B.A."/>
            <person name="Brody-Karpin S.D."/>
            <person name="Zaretsky E.J."/>
            <person name="Tang M."/>
            <person name="Lopez de Leon A."/>
            <person name="Xiang H."/>
            <person name="Gusti V."/>
            <person name="Clausen I.G."/>
            <person name="Olsen P.B."/>
            <person name="Rasmussen M.D."/>
            <person name="Andersen J.T."/>
            <person name="Joergensen P.L."/>
            <person name="Larsen T.S."/>
            <person name="Sorokin A."/>
            <person name="Bolotin A."/>
            <person name="Lapidus A."/>
            <person name="Galleron N."/>
            <person name="Ehrlich S.D."/>
            <person name="Berka R.M."/>
        </authorList>
    </citation>
    <scope>NUCLEOTIDE SEQUENCE [LARGE SCALE GENOMIC DNA]</scope>
    <source>
        <strain>ATCC 14580 / DSM 13 / JCM 2505 / CCUG 7422 / NBRC 12200 / NCIMB 9375 / NCTC 10341 / NRRL NRS-1264 / Gibson 46</strain>
    </source>
</reference>
<evidence type="ECO:0000255" key="1">
    <source>
        <dbReference type="HAMAP-Rule" id="MF_01185"/>
    </source>
</evidence>
<evidence type="ECO:0000305" key="2"/>
<protein>
    <recommendedName>
        <fullName evidence="1">Flagellar assembly factor FliW</fullName>
    </recommendedName>
</protein>
<sequence>MIIKTKYHGETQIQEDQTIVFKNGLPGFTGEKKFVILPLSEDSPFVVLQSVQSEELAFIVASPFVFFKDYGFDLDETTVELLEIESAEDVEVMAILTIEEPFEKSTANLMAPIVVNRRKMLAKQVILHDSSYLTKQPIGGEAC</sequence>
<feature type="chain" id="PRO_0000272968" description="Flagellar assembly factor FliW">
    <location>
        <begin position="1"/>
        <end position="143"/>
    </location>
</feature>
<gene>
    <name evidence="1" type="primary">fliW</name>
    <name type="ordered locus">BLi03782</name>
    <name type="ordered locus">BL03372</name>
</gene>
<proteinExistence type="inferred from homology"/>
<organism>
    <name type="scientific">Bacillus licheniformis (strain ATCC 14580 / DSM 13 / JCM 2505 / CCUG 7422 / NBRC 12200 / NCIMB 9375 / NCTC 10341 / NRRL NRS-1264 / Gibson 46)</name>
    <dbReference type="NCBI Taxonomy" id="279010"/>
    <lineage>
        <taxon>Bacteria</taxon>
        <taxon>Bacillati</taxon>
        <taxon>Bacillota</taxon>
        <taxon>Bacilli</taxon>
        <taxon>Bacillales</taxon>
        <taxon>Bacillaceae</taxon>
        <taxon>Bacillus</taxon>
    </lineage>
</organism>
<keyword id="KW-1005">Bacterial flagellum biogenesis</keyword>
<keyword id="KW-0143">Chaperone</keyword>
<keyword id="KW-0963">Cytoplasm</keyword>
<keyword id="KW-1185">Reference proteome</keyword>
<keyword id="KW-0810">Translation regulation</keyword>